<comment type="subunit">
    <text evidence="1">Part of the 50S ribosomal subunit.</text>
</comment>
<comment type="subcellular location">
    <subcellularLocation>
        <location>Plastid</location>
        <location>Chloroplast</location>
    </subcellularLocation>
</comment>
<comment type="similarity">
    <text evidence="1">Belongs to the universal ribosomal protein uL16 family.</text>
</comment>
<evidence type="ECO:0000255" key="1">
    <source>
        <dbReference type="HAMAP-Rule" id="MF_01342"/>
    </source>
</evidence>
<evidence type="ECO:0000305" key="2"/>
<reference key="1">
    <citation type="journal article" date="2007" name="Proc. Natl. Acad. Sci. U.S.A.">
        <title>Using plastid genome-scale data to resolve enigmatic relationships among basal angiosperms.</title>
        <authorList>
            <person name="Moore M.J."/>
            <person name="Bell C.D."/>
            <person name="Soltis P.S."/>
            <person name="Soltis D.E."/>
        </authorList>
    </citation>
    <scope>NUCLEOTIDE SEQUENCE [LARGE SCALE GENOMIC DNA]</scope>
</reference>
<protein>
    <recommendedName>
        <fullName evidence="1">Large ribosomal subunit protein uL16c</fullName>
    </recommendedName>
    <alternativeName>
        <fullName evidence="2">50S ribosomal protein L16, chloroplastic</fullName>
    </alternativeName>
</protein>
<feature type="chain" id="PRO_0000354621" description="Large ribosomal subunit protein uL16c">
    <location>
        <begin position="1"/>
        <end position="135"/>
    </location>
</feature>
<proteinExistence type="inferred from homology"/>
<gene>
    <name evidence="1" type="primary">rpl16</name>
</gene>
<sequence>MLSPKRTRFRKQHRGRMKGISSRGNRICFGRYALQALEPAWITSRQIEAGRRAMTRYARRGGKIWVRIFPDKPVTVRPTETRMGSGKGSPEYWVSVVKPGRILYEMGGISETVARAAIEIAASKMPIRTQFVIAG</sequence>
<name>RK16_CERDE</name>
<dbReference type="EMBL" id="EF614270">
    <property type="protein sequence ID" value="ABQ81489.1"/>
    <property type="molecule type" value="Genomic_DNA"/>
</dbReference>
<dbReference type="RefSeq" id="YP_001542485.1">
    <property type="nucleotide sequence ID" value="NC_009962.1"/>
</dbReference>
<dbReference type="SMR" id="A8SEE1"/>
<dbReference type="GeneID" id="5729469"/>
<dbReference type="GO" id="GO:0009507">
    <property type="term" value="C:chloroplast"/>
    <property type="evidence" value="ECO:0007669"/>
    <property type="project" value="UniProtKB-SubCell"/>
</dbReference>
<dbReference type="GO" id="GO:0005762">
    <property type="term" value="C:mitochondrial large ribosomal subunit"/>
    <property type="evidence" value="ECO:0007669"/>
    <property type="project" value="TreeGrafter"/>
</dbReference>
<dbReference type="GO" id="GO:0019843">
    <property type="term" value="F:rRNA binding"/>
    <property type="evidence" value="ECO:0007669"/>
    <property type="project" value="InterPro"/>
</dbReference>
<dbReference type="GO" id="GO:0003735">
    <property type="term" value="F:structural constituent of ribosome"/>
    <property type="evidence" value="ECO:0007669"/>
    <property type="project" value="InterPro"/>
</dbReference>
<dbReference type="GO" id="GO:0032543">
    <property type="term" value="P:mitochondrial translation"/>
    <property type="evidence" value="ECO:0007669"/>
    <property type="project" value="TreeGrafter"/>
</dbReference>
<dbReference type="CDD" id="cd01433">
    <property type="entry name" value="Ribosomal_L16_L10e"/>
    <property type="match status" value="1"/>
</dbReference>
<dbReference type="FunFam" id="3.90.1170.10:FF:000001">
    <property type="entry name" value="50S ribosomal protein L16"/>
    <property type="match status" value="1"/>
</dbReference>
<dbReference type="Gene3D" id="3.90.1170.10">
    <property type="entry name" value="Ribosomal protein L10e/L16"/>
    <property type="match status" value="1"/>
</dbReference>
<dbReference type="HAMAP" id="MF_01342">
    <property type="entry name" value="Ribosomal_uL16"/>
    <property type="match status" value="1"/>
</dbReference>
<dbReference type="InterPro" id="IPR047873">
    <property type="entry name" value="Ribosomal_uL16"/>
</dbReference>
<dbReference type="InterPro" id="IPR000114">
    <property type="entry name" value="Ribosomal_uL16_bact-type"/>
</dbReference>
<dbReference type="InterPro" id="IPR020798">
    <property type="entry name" value="Ribosomal_uL16_CS"/>
</dbReference>
<dbReference type="InterPro" id="IPR016180">
    <property type="entry name" value="Ribosomal_uL16_dom"/>
</dbReference>
<dbReference type="InterPro" id="IPR036920">
    <property type="entry name" value="Ribosomal_uL16_sf"/>
</dbReference>
<dbReference type="NCBIfam" id="TIGR01164">
    <property type="entry name" value="rplP_bact"/>
    <property type="match status" value="1"/>
</dbReference>
<dbReference type="PANTHER" id="PTHR12220">
    <property type="entry name" value="50S/60S RIBOSOMAL PROTEIN L16"/>
    <property type="match status" value="1"/>
</dbReference>
<dbReference type="PANTHER" id="PTHR12220:SF13">
    <property type="entry name" value="LARGE RIBOSOMAL SUBUNIT PROTEIN UL16M"/>
    <property type="match status" value="1"/>
</dbReference>
<dbReference type="Pfam" id="PF00252">
    <property type="entry name" value="Ribosomal_L16"/>
    <property type="match status" value="1"/>
</dbReference>
<dbReference type="PRINTS" id="PR00060">
    <property type="entry name" value="RIBOSOMALL16"/>
</dbReference>
<dbReference type="SUPFAM" id="SSF54686">
    <property type="entry name" value="Ribosomal protein L16p/L10e"/>
    <property type="match status" value="1"/>
</dbReference>
<dbReference type="PROSITE" id="PS00586">
    <property type="entry name" value="RIBOSOMAL_L16_1"/>
    <property type="match status" value="1"/>
</dbReference>
<dbReference type="PROSITE" id="PS00701">
    <property type="entry name" value="RIBOSOMAL_L16_2"/>
    <property type="match status" value="1"/>
</dbReference>
<accession>A8SEE1</accession>
<geneLocation type="chloroplast"/>
<keyword id="KW-0150">Chloroplast</keyword>
<keyword id="KW-0934">Plastid</keyword>
<keyword id="KW-0687">Ribonucleoprotein</keyword>
<keyword id="KW-0689">Ribosomal protein</keyword>
<organism>
    <name type="scientific">Ceratophyllum demersum</name>
    <name type="common">Rigid hornwort</name>
    <name type="synonym">Coontail</name>
    <dbReference type="NCBI Taxonomy" id="4428"/>
    <lineage>
        <taxon>Eukaryota</taxon>
        <taxon>Viridiplantae</taxon>
        <taxon>Streptophyta</taxon>
        <taxon>Embryophyta</taxon>
        <taxon>Tracheophyta</taxon>
        <taxon>Spermatophyta</taxon>
        <taxon>Magnoliopsida</taxon>
        <taxon>Ceratophyllales</taxon>
        <taxon>Ceratophyllaceae</taxon>
        <taxon>Ceratophyllum</taxon>
    </lineage>
</organism>